<sequence length="301" mass="32495">MKIAVLSRNPRLYSTRRLVEAGTERGHEMVVIDTLRAYMNIASHKPQIHYRGKPLEGFDAVIPRIGASVTFYGCAVLRQFEMMGVFPLNESVAIARSRDKLRSLQLLSRRGIGLPVTGFAHSPDDIPDLIDMVNGAPLVIKVLEGTQGIGVVLCETATAAESVIEAFMGLKQNIMVQEYIKEAGGADIRCFVVGDKVIAAMKRQAKPGEFRSNLHRGGSASLIKITPEERMTALRAAKVMGLAVAGVDILRSNHGPLVMEVNSSPGLEGIETTTGKNVAGIIIEHLEKNGGPNMTRTKGKG</sequence>
<comment type="cofactor">
    <cofactor evidence="1">
        <name>Mg(2+)</name>
        <dbReference type="ChEBI" id="CHEBI:18420"/>
    </cofactor>
    <cofactor evidence="1">
        <name>Mn(2+)</name>
        <dbReference type="ChEBI" id="CHEBI:29035"/>
    </cofactor>
    <text evidence="1">Binds 2 magnesium or manganese ions per subunit.</text>
</comment>
<comment type="similarity">
    <text evidence="1">Belongs to the RimK family.</text>
</comment>
<keyword id="KW-0067">ATP-binding</keyword>
<keyword id="KW-0436">Ligase</keyword>
<keyword id="KW-0460">Magnesium</keyword>
<keyword id="KW-0464">Manganese</keyword>
<keyword id="KW-0479">Metal-binding</keyword>
<keyword id="KW-0547">Nucleotide-binding</keyword>
<keyword id="KW-0648">Protein biosynthesis</keyword>
<reference key="1">
    <citation type="journal article" date="2009" name="Genome Biol.">
        <title>Genomic and genetic analyses of diversity and plant interactions of Pseudomonas fluorescens.</title>
        <authorList>
            <person name="Silby M.W."/>
            <person name="Cerdeno-Tarraga A.M."/>
            <person name="Vernikos G.S."/>
            <person name="Giddens S.R."/>
            <person name="Jackson R.W."/>
            <person name="Preston G.M."/>
            <person name="Zhang X.-X."/>
            <person name="Moon C.D."/>
            <person name="Gehrig S.M."/>
            <person name="Godfrey S.A.C."/>
            <person name="Knight C.G."/>
            <person name="Malone J.G."/>
            <person name="Robinson Z."/>
            <person name="Spiers A.J."/>
            <person name="Harris S."/>
            <person name="Challis G.L."/>
            <person name="Yaxley A.M."/>
            <person name="Harris D."/>
            <person name="Seeger K."/>
            <person name="Murphy L."/>
            <person name="Rutter S."/>
            <person name="Squares R."/>
            <person name="Quail M.A."/>
            <person name="Saunders E."/>
            <person name="Mavromatis K."/>
            <person name="Brettin T.S."/>
            <person name="Bentley S.D."/>
            <person name="Hothersall J."/>
            <person name="Stephens E."/>
            <person name="Thomas C.M."/>
            <person name="Parkhill J."/>
            <person name="Levy S.B."/>
            <person name="Rainey P.B."/>
            <person name="Thomson N.R."/>
        </authorList>
    </citation>
    <scope>NUCLEOTIDE SEQUENCE [LARGE SCALE GENOMIC DNA]</scope>
    <source>
        <strain>Pf0-1</strain>
    </source>
</reference>
<organism>
    <name type="scientific">Pseudomonas fluorescens (strain Pf0-1)</name>
    <dbReference type="NCBI Taxonomy" id="205922"/>
    <lineage>
        <taxon>Bacteria</taxon>
        <taxon>Pseudomonadati</taxon>
        <taxon>Pseudomonadota</taxon>
        <taxon>Gammaproteobacteria</taxon>
        <taxon>Pseudomonadales</taxon>
        <taxon>Pseudomonadaceae</taxon>
        <taxon>Pseudomonas</taxon>
    </lineage>
</organism>
<protein>
    <recommendedName>
        <fullName evidence="1">Probable alpha-L-glutamate ligase</fullName>
        <ecNumber evidence="1">6.3.2.-</ecNumber>
    </recommendedName>
</protein>
<feature type="chain" id="PRO_1000068851" description="Probable alpha-L-glutamate ligase">
    <location>
        <begin position="1"/>
        <end position="301"/>
    </location>
</feature>
<feature type="domain" description="ATP-grasp" evidence="1">
    <location>
        <begin position="104"/>
        <end position="287"/>
    </location>
</feature>
<feature type="binding site" evidence="1">
    <location>
        <position position="141"/>
    </location>
    <ligand>
        <name>ATP</name>
        <dbReference type="ChEBI" id="CHEBI:30616"/>
    </ligand>
</feature>
<feature type="binding site" evidence="1">
    <location>
        <begin position="178"/>
        <end position="179"/>
    </location>
    <ligand>
        <name>ATP</name>
        <dbReference type="ChEBI" id="CHEBI:30616"/>
    </ligand>
</feature>
<feature type="binding site" evidence="1">
    <location>
        <position position="187"/>
    </location>
    <ligand>
        <name>ATP</name>
        <dbReference type="ChEBI" id="CHEBI:30616"/>
    </ligand>
</feature>
<feature type="binding site" evidence="1">
    <location>
        <begin position="211"/>
        <end position="213"/>
    </location>
    <ligand>
        <name>ATP</name>
        <dbReference type="ChEBI" id="CHEBI:30616"/>
    </ligand>
</feature>
<feature type="binding site" evidence="1">
    <location>
        <position position="248"/>
    </location>
    <ligand>
        <name>Mg(2+)</name>
        <dbReference type="ChEBI" id="CHEBI:18420"/>
        <label>1</label>
    </ligand>
</feature>
<feature type="binding site" evidence="1">
    <location>
        <position position="248"/>
    </location>
    <ligand>
        <name>Mn(2+)</name>
        <dbReference type="ChEBI" id="CHEBI:29035"/>
        <label>1</label>
    </ligand>
</feature>
<feature type="binding site" evidence="1">
    <location>
        <position position="260"/>
    </location>
    <ligand>
        <name>Mg(2+)</name>
        <dbReference type="ChEBI" id="CHEBI:18420"/>
        <label>1</label>
    </ligand>
</feature>
<feature type="binding site" evidence="1">
    <location>
        <position position="260"/>
    </location>
    <ligand>
        <name>Mg(2+)</name>
        <dbReference type="ChEBI" id="CHEBI:18420"/>
        <label>2</label>
    </ligand>
</feature>
<feature type="binding site" evidence="1">
    <location>
        <position position="260"/>
    </location>
    <ligand>
        <name>Mn(2+)</name>
        <dbReference type="ChEBI" id="CHEBI:29035"/>
        <label>1</label>
    </ligand>
</feature>
<feature type="binding site" evidence="1">
    <location>
        <position position="260"/>
    </location>
    <ligand>
        <name>Mn(2+)</name>
        <dbReference type="ChEBI" id="CHEBI:29035"/>
        <label>2</label>
    </ligand>
</feature>
<feature type="binding site" evidence="1">
    <location>
        <position position="262"/>
    </location>
    <ligand>
        <name>Mg(2+)</name>
        <dbReference type="ChEBI" id="CHEBI:18420"/>
        <label>2</label>
    </ligand>
</feature>
<feature type="binding site" evidence="1">
    <location>
        <position position="262"/>
    </location>
    <ligand>
        <name>Mn(2+)</name>
        <dbReference type="ChEBI" id="CHEBI:29035"/>
        <label>2</label>
    </ligand>
</feature>
<name>RIMK_PSEPF</name>
<gene>
    <name evidence="1" type="primary">rimK</name>
    <name type="ordered locus">Pfl01_0262</name>
</gene>
<proteinExistence type="inferred from homology"/>
<evidence type="ECO:0000255" key="1">
    <source>
        <dbReference type="HAMAP-Rule" id="MF_01552"/>
    </source>
</evidence>
<accession>Q3KJQ0</accession>
<dbReference type="EC" id="6.3.2.-" evidence="1"/>
<dbReference type="EMBL" id="CP000094">
    <property type="protein sequence ID" value="ABA72006.1"/>
    <property type="molecule type" value="Genomic_DNA"/>
</dbReference>
<dbReference type="RefSeq" id="WP_007949201.1">
    <property type="nucleotide sequence ID" value="NC_007492.2"/>
</dbReference>
<dbReference type="SMR" id="Q3KJQ0"/>
<dbReference type="GeneID" id="93486981"/>
<dbReference type="KEGG" id="pfo:Pfl01_0262"/>
<dbReference type="eggNOG" id="COG0189">
    <property type="taxonomic scope" value="Bacteria"/>
</dbReference>
<dbReference type="HOGENOM" id="CLU_054353_0_1_6"/>
<dbReference type="Proteomes" id="UP000002704">
    <property type="component" value="Chromosome"/>
</dbReference>
<dbReference type="GO" id="GO:0005737">
    <property type="term" value="C:cytoplasm"/>
    <property type="evidence" value="ECO:0007669"/>
    <property type="project" value="TreeGrafter"/>
</dbReference>
<dbReference type="GO" id="GO:0005524">
    <property type="term" value="F:ATP binding"/>
    <property type="evidence" value="ECO:0007669"/>
    <property type="project" value="UniProtKB-UniRule"/>
</dbReference>
<dbReference type="GO" id="GO:0046872">
    <property type="term" value="F:metal ion binding"/>
    <property type="evidence" value="ECO:0007669"/>
    <property type="project" value="UniProtKB-KW"/>
</dbReference>
<dbReference type="GO" id="GO:0018169">
    <property type="term" value="F:ribosomal S6-glutamic acid ligase activity"/>
    <property type="evidence" value="ECO:0007669"/>
    <property type="project" value="TreeGrafter"/>
</dbReference>
<dbReference type="GO" id="GO:0036211">
    <property type="term" value="P:protein modification process"/>
    <property type="evidence" value="ECO:0007669"/>
    <property type="project" value="InterPro"/>
</dbReference>
<dbReference type="GO" id="GO:0009432">
    <property type="term" value="P:SOS response"/>
    <property type="evidence" value="ECO:0007669"/>
    <property type="project" value="TreeGrafter"/>
</dbReference>
<dbReference type="GO" id="GO:0006412">
    <property type="term" value="P:translation"/>
    <property type="evidence" value="ECO:0007669"/>
    <property type="project" value="UniProtKB-KW"/>
</dbReference>
<dbReference type="FunFam" id="3.40.50.20:FF:000004">
    <property type="entry name" value="Probable alpha-L-glutamate ligase"/>
    <property type="match status" value="1"/>
</dbReference>
<dbReference type="FunFam" id="3.30.1490.20:FF:000005">
    <property type="entry name" value="Probable alpha-L-glutamate ligase 1"/>
    <property type="match status" value="1"/>
</dbReference>
<dbReference type="FunFam" id="3.30.470.20:FF:000016">
    <property type="entry name" value="Ribosomal protein S6--L-glutamate ligase"/>
    <property type="match status" value="1"/>
</dbReference>
<dbReference type="Gene3D" id="3.40.50.20">
    <property type="match status" value="1"/>
</dbReference>
<dbReference type="Gene3D" id="3.30.1490.20">
    <property type="entry name" value="ATP-grasp fold, A domain"/>
    <property type="match status" value="1"/>
</dbReference>
<dbReference type="Gene3D" id="3.30.470.20">
    <property type="entry name" value="ATP-grasp fold, B domain"/>
    <property type="match status" value="1"/>
</dbReference>
<dbReference type="HAMAP" id="MF_01552">
    <property type="entry name" value="RimK"/>
    <property type="match status" value="1"/>
</dbReference>
<dbReference type="InterPro" id="IPR011761">
    <property type="entry name" value="ATP-grasp"/>
</dbReference>
<dbReference type="InterPro" id="IPR013651">
    <property type="entry name" value="ATP-grasp_RimK-type"/>
</dbReference>
<dbReference type="InterPro" id="IPR013815">
    <property type="entry name" value="ATP_grasp_subdomain_1"/>
</dbReference>
<dbReference type="InterPro" id="IPR023533">
    <property type="entry name" value="RimK"/>
</dbReference>
<dbReference type="InterPro" id="IPR041107">
    <property type="entry name" value="Rimk_N"/>
</dbReference>
<dbReference type="InterPro" id="IPR004666">
    <property type="entry name" value="Rp_bS6_RimK/Lys_biosynth_LsyX"/>
</dbReference>
<dbReference type="NCBIfam" id="NF007764">
    <property type="entry name" value="PRK10446.1"/>
    <property type="match status" value="1"/>
</dbReference>
<dbReference type="NCBIfam" id="TIGR00768">
    <property type="entry name" value="rimK_fam"/>
    <property type="match status" value="1"/>
</dbReference>
<dbReference type="PANTHER" id="PTHR21621:SF7">
    <property type="entry name" value="RIBOSOMAL PROTEIN BS6--L-GLUTAMATE LIGASE"/>
    <property type="match status" value="1"/>
</dbReference>
<dbReference type="PANTHER" id="PTHR21621">
    <property type="entry name" value="RIBOSOMAL PROTEIN S6 MODIFICATION PROTEIN"/>
    <property type="match status" value="1"/>
</dbReference>
<dbReference type="Pfam" id="PF08443">
    <property type="entry name" value="RimK"/>
    <property type="match status" value="1"/>
</dbReference>
<dbReference type="Pfam" id="PF18030">
    <property type="entry name" value="Rimk_N"/>
    <property type="match status" value="1"/>
</dbReference>
<dbReference type="SUPFAM" id="SSF56059">
    <property type="entry name" value="Glutathione synthetase ATP-binding domain-like"/>
    <property type="match status" value="1"/>
</dbReference>
<dbReference type="PROSITE" id="PS50975">
    <property type="entry name" value="ATP_GRASP"/>
    <property type="match status" value="1"/>
</dbReference>